<evidence type="ECO:0000256" key="1">
    <source>
        <dbReference type="SAM" id="MobiDB-lite"/>
    </source>
</evidence>
<evidence type="ECO:0000305" key="2"/>
<reference key="1">
    <citation type="journal article" date="1995" name="J. Bacteriol.">
        <title>Pediococcus acidilactici ldhD gene: cloning, nucleotide sequence, and transcriptional analysis.</title>
        <authorList>
            <person name="Garmyn D."/>
            <person name="Ferain T."/>
            <person name="Bernard N."/>
            <person name="Hols P."/>
            <person name="Delplace B."/>
            <person name="Delcour J."/>
        </authorList>
    </citation>
    <scope>NUCLEOTIDE SEQUENCE [GENOMIC DNA]</scope>
    <source>
        <strain>DG302</strain>
    </source>
</reference>
<dbReference type="EMBL" id="X70925">
    <property type="protein sequence ID" value="CAA50276.1"/>
    <property type="molecule type" value="Genomic_DNA"/>
</dbReference>
<dbReference type="RefSeq" id="WP_002831534.1">
    <property type="nucleotide sequence ID" value="NZ_WHSF01000003.1"/>
</dbReference>
<dbReference type="SMR" id="P49668"/>
<dbReference type="STRING" id="1254.A4V11_01325"/>
<dbReference type="GeneID" id="57365809"/>
<dbReference type="OrthoDB" id="9808036at2"/>
<dbReference type="GO" id="GO:0022627">
    <property type="term" value="C:cytosolic small ribosomal subunit"/>
    <property type="evidence" value="ECO:0007669"/>
    <property type="project" value="TreeGrafter"/>
</dbReference>
<dbReference type="GO" id="GO:0003735">
    <property type="term" value="F:structural constituent of ribosome"/>
    <property type="evidence" value="ECO:0007669"/>
    <property type="project" value="InterPro"/>
</dbReference>
<dbReference type="GO" id="GO:0006412">
    <property type="term" value="P:translation"/>
    <property type="evidence" value="ECO:0007669"/>
    <property type="project" value="UniProtKB-UniRule"/>
</dbReference>
<dbReference type="CDD" id="cd01425">
    <property type="entry name" value="RPS2"/>
    <property type="match status" value="1"/>
</dbReference>
<dbReference type="FunFam" id="1.10.287.610:FF:000001">
    <property type="entry name" value="30S ribosomal protein S2"/>
    <property type="match status" value="1"/>
</dbReference>
<dbReference type="Gene3D" id="3.40.50.10490">
    <property type="entry name" value="Glucose-6-phosphate isomerase like protein, domain 1"/>
    <property type="match status" value="1"/>
</dbReference>
<dbReference type="Gene3D" id="1.10.287.610">
    <property type="entry name" value="Helix hairpin bin"/>
    <property type="match status" value="1"/>
</dbReference>
<dbReference type="HAMAP" id="MF_00291_B">
    <property type="entry name" value="Ribosomal_uS2_B"/>
    <property type="match status" value="1"/>
</dbReference>
<dbReference type="InterPro" id="IPR001865">
    <property type="entry name" value="Ribosomal_uS2"/>
</dbReference>
<dbReference type="InterPro" id="IPR005706">
    <property type="entry name" value="Ribosomal_uS2_bac/mit/plastid"/>
</dbReference>
<dbReference type="InterPro" id="IPR018130">
    <property type="entry name" value="Ribosomal_uS2_CS"/>
</dbReference>
<dbReference type="InterPro" id="IPR023591">
    <property type="entry name" value="Ribosomal_uS2_flav_dom_sf"/>
</dbReference>
<dbReference type="NCBIfam" id="TIGR01011">
    <property type="entry name" value="rpsB_bact"/>
    <property type="match status" value="1"/>
</dbReference>
<dbReference type="PANTHER" id="PTHR12534">
    <property type="entry name" value="30S RIBOSOMAL PROTEIN S2 PROKARYOTIC AND ORGANELLAR"/>
    <property type="match status" value="1"/>
</dbReference>
<dbReference type="PANTHER" id="PTHR12534:SF0">
    <property type="entry name" value="SMALL RIBOSOMAL SUBUNIT PROTEIN US2M"/>
    <property type="match status" value="1"/>
</dbReference>
<dbReference type="Pfam" id="PF00318">
    <property type="entry name" value="Ribosomal_S2"/>
    <property type="match status" value="1"/>
</dbReference>
<dbReference type="PRINTS" id="PR00395">
    <property type="entry name" value="RIBOSOMALS2"/>
</dbReference>
<dbReference type="SUPFAM" id="SSF52313">
    <property type="entry name" value="Ribosomal protein S2"/>
    <property type="match status" value="1"/>
</dbReference>
<dbReference type="PROSITE" id="PS00962">
    <property type="entry name" value="RIBOSOMAL_S2_1"/>
    <property type="match status" value="1"/>
</dbReference>
<dbReference type="PROSITE" id="PS00963">
    <property type="entry name" value="RIBOSOMAL_S2_2"/>
    <property type="match status" value="1"/>
</dbReference>
<keyword id="KW-0687">Ribonucleoprotein</keyword>
<keyword id="KW-0689">Ribosomal protein</keyword>
<accession>P49668</accession>
<proteinExistence type="inferred from homology"/>
<gene>
    <name type="primary">rpsB</name>
</gene>
<name>RS2_PEDAC</name>
<feature type="chain" id="PRO_0000134212" description="Small ribosomal subunit protein uS2">
    <location>
        <begin position="1"/>
        <end position="261"/>
    </location>
</feature>
<feature type="region of interest" description="Disordered" evidence="1">
    <location>
        <begin position="224"/>
        <end position="261"/>
    </location>
</feature>
<feature type="compositionally biased region" description="Acidic residues" evidence="1">
    <location>
        <begin position="228"/>
        <end position="239"/>
    </location>
</feature>
<feature type="compositionally biased region" description="Basic and acidic residues" evidence="1">
    <location>
        <begin position="242"/>
        <end position="255"/>
    </location>
</feature>
<organism>
    <name type="scientific">Pediococcus acidilactici</name>
    <dbReference type="NCBI Taxonomy" id="1254"/>
    <lineage>
        <taxon>Bacteria</taxon>
        <taxon>Bacillati</taxon>
        <taxon>Bacillota</taxon>
        <taxon>Bacilli</taxon>
        <taxon>Lactobacillales</taxon>
        <taxon>Lactobacillaceae</taxon>
        <taxon>Pediococcus</taxon>
        <taxon>Pediococcus acidilactici group</taxon>
    </lineage>
</organism>
<protein>
    <recommendedName>
        <fullName evidence="2">Small ribosomal subunit protein uS2</fullName>
    </recommendedName>
    <alternativeName>
        <fullName>30S ribosomal protein S2</fullName>
    </alternativeName>
</protein>
<comment type="similarity">
    <text evidence="2">Belongs to the universal ribosomal protein uS2 family.</text>
</comment>
<sequence length="261" mass="29570">MSVISMKQLLEAGVHFGHQTRRWNPKMKPFIFTERNGIYIIDLQKTVKLIDNAYNFVKDVAANDGVVLFVGTKKQAQTAIEEEAKRAGQFYVNHRWLGGTLTNWNTIQKRIKRLKDLKKMEEDGTFDRLPKKEVALLNKQKDKLEKFLGGIEDMPHIPDVLFVVDPRKEQIAIKEAQKLNIPVVAMVDTNTDPDQVDVIIPSNDDAIRAVRLITSKMADAVVEGRQGEDDEAVQQEEVAEGVSKDSLEDLKKTVEEGSNEE</sequence>